<gene>
    <name type="primary">pgl</name>
    <name type="synonym">devB</name>
    <name type="ordered locus">ML0579</name>
    <name type="ORF">B1496_F1_31</name>
</gene>
<feature type="chain" id="PRO_0000090100" description="6-phosphogluconolactonase">
    <location>
        <begin position="1"/>
        <end position="247"/>
    </location>
</feature>
<reference key="1">
    <citation type="submission" date="1994-01" db="EMBL/GenBank/DDBJ databases">
        <authorList>
            <person name="Smith D.R."/>
            <person name="Robison K."/>
        </authorList>
    </citation>
    <scope>NUCLEOTIDE SEQUENCE [GENOMIC DNA]</scope>
</reference>
<reference key="2">
    <citation type="journal article" date="2001" name="Nature">
        <title>Massive gene decay in the leprosy bacillus.</title>
        <authorList>
            <person name="Cole S.T."/>
            <person name="Eiglmeier K."/>
            <person name="Parkhill J."/>
            <person name="James K.D."/>
            <person name="Thomson N.R."/>
            <person name="Wheeler P.R."/>
            <person name="Honore N."/>
            <person name="Garnier T."/>
            <person name="Churcher C.M."/>
            <person name="Harris D.E."/>
            <person name="Mungall K.L."/>
            <person name="Basham D."/>
            <person name="Brown D."/>
            <person name="Chillingworth T."/>
            <person name="Connor R."/>
            <person name="Davies R.M."/>
            <person name="Devlin K."/>
            <person name="Duthoy S."/>
            <person name="Feltwell T."/>
            <person name="Fraser A."/>
            <person name="Hamlin N."/>
            <person name="Holroyd S."/>
            <person name="Hornsby T."/>
            <person name="Jagels K."/>
            <person name="Lacroix C."/>
            <person name="Maclean J."/>
            <person name="Moule S."/>
            <person name="Murphy L.D."/>
            <person name="Oliver K."/>
            <person name="Quail M.A."/>
            <person name="Rajandream M.A."/>
            <person name="Rutherford K.M."/>
            <person name="Rutter S."/>
            <person name="Seeger K."/>
            <person name="Simon S."/>
            <person name="Simmonds M."/>
            <person name="Skelton J."/>
            <person name="Squares R."/>
            <person name="Squares S."/>
            <person name="Stevens K."/>
            <person name="Taylor K."/>
            <person name="Whitehead S."/>
            <person name="Woodward J.R."/>
            <person name="Barrell B.G."/>
        </authorList>
    </citation>
    <scope>NUCLEOTIDE SEQUENCE [LARGE SCALE GENOMIC DNA]</scope>
    <source>
        <strain>TN</strain>
    </source>
</reference>
<accession>Q49700</accession>
<dbReference type="EC" id="3.1.1.31"/>
<dbReference type="EMBL" id="U00013">
    <property type="protein sequence ID" value="AAA17114.1"/>
    <property type="molecule type" value="Genomic_DNA"/>
</dbReference>
<dbReference type="EMBL" id="AL583919">
    <property type="protein sequence ID" value="CAC30087.1"/>
    <property type="molecule type" value="Genomic_DNA"/>
</dbReference>
<dbReference type="PIR" id="S72775">
    <property type="entry name" value="S72775"/>
</dbReference>
<dbReference type="RefSeq" id="NP_301491.1">
    <property type="nucleotide sequence ID" value="NC_002677.1"/>
</dbReference>
<dbReference type="RefSeq" id="WP_010907815.1">
    <property type="nucleotide sequence ID" value="NC_002677.1"/>
</dbReference>
<dbReference type="SMR" id="Q49700"/>
<dbReference type="STRING" id="272631.gene:17574400"/>
<dbReference type="KEGG" id="mle:ML0579"/>
<dbReference type="PATRIC" id="fig|272631.5.peg.1008"/>
<dbReference type="Leproma" id="ML0579"/>
<dbReference type="eggNOG" id="COG0363">
    <property type="taxonomic scope" value="Bacteria"/>
</dbReference>
<dbReference type="HOGENOM" id="CLU_053947_1_0_11"/>
<dbReference type="OrthoDB" id="9810967at2"/>
<dbReference type="UniPathway" id="UPA00115">
    <property type="reaction ID" value="UER00409"/>
</dbReference>
<dbReference type="Proteomes" id="UP000000806">
    <property type="component" value="Chromosome"/>
</dbReference>
<dbReference type="GO" id="GO:0017057">
    <property type="term" value="F:6-phosphogluconolactonase activity"/>
    <property type="evidence" value="ECO:0007669"/>
    <property type="project" value="UniProtKB-EC"/>
</dbReference>
<dbReference type="GO" id="GO:0005975">
    <property type="term" value="P:carbohydrate metabolic process"/>
    <property type="evidence" value="ECO:0007669"/>
    <property type="project" value="InterPro"/>
</dbReference>
<dbReference type="GO" id="GO:0006098">
    <property type="term" value="P:pentose-phosphate shunt"/>
    <property type="evidence" value="ECO:0007669"/>
    <property type="project" value="UniProtKB-UniPathway"/>
</dbReference>
<dbReference type="CDD" id="cd01400">
    <property type="entry name" value="6PGL"/>
    <property type="match status" value="1"/>
</dbReference>
<dbReference type="Gene3D" id="3.40.50.1360">
    <property type="match status" value="1"/>
</dbReference>
<dbReference type="InterPro" id="IPR005900">
    <property type="entry name" value="6-phosphogluconolactonase_DevB"/>
</dbReference>
<dbReference type="InterPro" id="IPR006148">
    <property type="entry name" value="Glc/Gal-6P_isomerase"/>
</dbReference>
<dbReference type="InterPro" id="IPR037171">
    <property type="entry name" value="NagB/RpiA_transferase-like"/>
</dbReference>
<dbReference type="InterPro" id="IPR039104">
    <property type="entry name" value="PGLS"/>
</dbReference>
<dbReference type="NCBIfam" id="TIGR01198">
    <property type="entry name" value="pgl"/>
    <property type="match status" value="1"/>
</dbReference>
<dbReference type="PANTHER" id="PTHR11054">
    <property type="entry name" value="6-PHOSPHOGLUCONOLACTONASE"/>
    <property type="match status" value="1"/>
</dbReference>
<dbReference type="PANTHER" id="PTHR11054:SF0">
    <property type="entry name" value="6-PHOSPHOGLUCONOLACTONASE"/>
    <property type="match status" value="1"/>
</dbReference>
<dbReference type="Pfam" id="PF01182">
    <property type="entry name" value="Glucosamine_iso"/>
    <property type="match status" value="1"/>
</dbReference>
<dbReference type="SUPFAM" id="SSF100950">
    <property type="entry name" value="NagB/RpiA/CoA transferase-like"/>
    <property type="match status" value="1"/>
</dbReference>
<organism>
    <name type="scientific">Mycobacterium leprae (strain TN)</name>
    <dbReference type="NCBI Taxonomy" id="272631"/>
    <lineage>
        <taxon>Bacteria</taxon>
        <taxon>Bacillati</taxon>
        <taxon>Actinomycetota</taxon>
        <taxon>Actinomycetes</taxon>
        <taxon>Mycobacteriales</taxon>
        <taxon>Mycobacteriaceae</taxon>
        <taxon>Mycobacterium</taxon>
    </lineage>
</organism>
<comment type="function">
    <text>Hydrolysis of 6-phosphogluconolactone to 6-phosphogluconate.</text>
</comment>
<comment type="catalytic activity">
    <reaction>
        <text>6-phospho-D-glucono-1,5-lactone + H2O = 6-phospho-D-gluconate + H(+)</text>
        <dbReference type="Rhea" id="RHEA:12556"/>
        <dbReference type="ChEBI" id="CHEBI:15377"/>
        <dbReference type="ChEBI" id="CHEBI:15378"/>
        <dbReference type="ChEBI" id="CHEBI:57955"/>
        <dbReference type="ChEBI" id="CHEBI:58759"/>
        <dbReference type="EC" id="3.1.1.31"/>
    </reaction>
</comment>
<comment type="pathway">
    <text>Carbohydrate degradation; pentose phosphate pathway; D-ribulose 5-phosphate from D-glucose 6-phosphate (oxidative stage): step 2/3.</text>
</comment>
<comment type="similarity">
    <text evidence="1">Belongs to the glucosamine/galactosamine-6-phosphate isomerase family. 6-phosphogluconolactonase subfamily.</text>
</comment>
<keyword id="KW-0378">Hydrolase</keyword>
<keyword id="KW-1185">Reference proteome</keyword>
<proteinExistence type="inferred from homology"/>
<sequence>MSASVEIFSDSKTMVGAAGKRLASTIQSAVAARERALIVLTGGSSGIGLLRDLATRGQQIDWSRVHLFWGDERYVPKDDDERNEKQARVALLDHIDIPPSQVHPMPAGDGEFGNDLEAAALAYEQLLAAYAAPGYPTPNFDVHLMGMGPEGHINSLFPNTVAVRETSRMVVGVRNSPKPPPERITLTLNAIQRSREVWLMVSGTAKADAVAAAMGGAPSASIPAAGAVGLETTLWLLDEEAAAKIPG</sequence>
<evidence type="ECO:0000305" key="1"/>
<protein>
    <recommendedName>
        <fullName>6-phosphogluconolactonase</fullName>
        <shortName>6PGL</shortName>
        <ecNumber>3.1.1.31</ecNumber>
    </recommendedName>
</protein>
<name>6PGL_MYCLE</name>